<sequence length="754" mass="86305">MTPATAEVKVGGRKRKNDEPVFIKTKQSRSARREEEKENLLNKSLPSTPTSSEAGSSRESSNPVTSSSRRKNPPTKLENIQKTLPTCSDGLEIRNYVKKYGLPEDNKFLVRNVFDKQLLFGKKYVCRRRVIKSIDEFFPRLKTDAHRENGLYNFCTLQFMKISSWGSSMDEKIYVTSAAIVQSYVIIVDDNDSVTCIENGISVIPMANRTLPSISYNSSNVKNITLTGPELKKAKNVYLAVIVKRKTPKLGENRVGTRGKSTRASFETAASSENFQQLVRFGCTLMYDKDAEINCLNDGVQRIILLDREEKPAYLKIFGKADEPELENAWMNNVKHLEFISDTNYNKEDSHLARLIFSSNTHNYFDRPDISKFSPWQPRSRRTTLKSGISVEPGTSCDEDCGSQYEDTITLKQLLLGTKKLCGRRKRHLTRLTSRWPCFSVDPTKINSYFNETGVTLLENSCSYRPGTQRSIPIKPTRVIRVREETPVSVPIEVITIEDDSDDSPCFSARNRAPGGTRKYGLDFIQSSGHMPYIRYVYMNRANDLVPQLNGEENGKIEGLMEAYPMNNAHMYSDIEFLRKEKLNLPKNAQKYGEMTILDYPLTKTETDEYNKKMSVMNVKDFAVKPRKPIPTVGNTTLSLDLEGCPISTFSEIFFPSGKTELFNILCRHFYSEAGQRPGCFSAQWKSRVLTGFINKYHQYIFDMKLNSLFEKQINLIAMVSPDWKLEDFELPMVRYKQLKKEWKNRQRDIPSSN</sequence>
<comment type="function">
    <text evidence="4 5 6">Component of a Polycomb group (PcG) complex. PcG proteins act by forming multiprotein complexes, which are required to maintain the transcriptionally repressive state of homeotic genes throughout development. In association with the nfya-1-NF-Y complex, may play a role in repressing the expression of the homeobox protein egl-5 in tissues such as the head (PubMed:17574230). PcG proteins are not required to initiate repression, but to maintain it during later stages of development. The mes-2/mes-3/mes-6 complex may participate in the global inactivation of the X chromosomes in germline cells. The complex may act via methylation of histone H3 'Lys-27', rendering chromatin heritably changed in its expressibility. This complex is required to exclude mes-4 from the inactivated X-chromosomes in germline cells.</text>
</comment>
<comment type="subunit">
    <text evidence="2 5 6">Forms a heterotrimeric complex with the Polycomb proteins mes-2 and mes-3. Does not interact with mes-4. Interacts with nyfa-1 (PubMed:17574230).</text>
</comment>
<comment type="subcellular location">
    <subcellularLocation>
        <location>Nucleus</location>
    </subcellularLocation>
</comment>
<comment type="tissue specificity">
    <text>In adults, it is predominantly expressed in the germline, and weakly expressed in intestinal cells.</text>
</comment>
<comment type="developmental stage">
    <text evidence="3">Expressed maternally and zygotically. Expressed in all cells of early embryos. In late embryos and L1 larva, it is weakly expressed, mainly in Z2 and Z3 cells.</text>
</comment>
<comment type="induction">
    <text>Repressed by GLD-1, which associates with the 3'-UTR of the mRNA and prevents its translation.</text>
</comment>
<comment type="disruption phenotype">
    <text evidence="6">RNAi-mediated knockdown results in ectopic expression of the homeobox protein egl-5 in the head region (PubMed:17574230). This ectopic expression of egl-5 in the head region is enhanced in a nfya-1 bp4 mutant background (PubMed:17574230).</text>
</comment>
<reference key="1">
    <citation type="journal article" date="1995" name="Genetics">
        <title>Phenotypic and molecular analysis of mes-3, a maternal-effect gene required for proliferation and viability of the germ line in C. elegans.</title>
        <authorList>
            <person name="Paulsen J.E."/>
            <person name="Capowski E.E."/>
            <person name="Strome S."/>
        </authorList>
    </citation>
    <scope>NUCLEOTIDE SEQUENCE [MRNA]</scope>
    <source>
        <strain>Bristol N2</strain>
    </source>
</reference>
<reference key="2">
    <citation type="journal article" date="1998" name="Science">
        <title>Genome sequence of the nematode C. elegans: a platform for investigating biology.</title>
        <authorList>
            <consortium name="The C. elegans sequencing consortium"/>
        </authorList>
    </citation>
    <scope>NUCLEOTIDE SEQUENCE [LARGE SCALE GENOMIC DNA]</scope>
    <source>
        <strain>Bristol N2</strain>
    </source>
</reference>
<reference key="3">
    <citation type="journal article" date="2001" name="Genetics">
        <title>Caenorhabditis elegans MES-3 is a target of GLD-1 and functions epigenetically in germline development.</title>
        <authorList>
            <person name="Xu L."/>
            <person name="Paulsen J."/>
            <person name="Yoo Y."/>
            <person name="Goodwin E.B."/>
            <person name="Strome S."/>
        </authorList>
    </citation>
    <scope>CHARACTERIZATION</scope>
    <scope>DEVELOPMENTAL STAGE</scope>
    <scope>MUTAGENESIS OF CYS-283</scope>
</reference>
<reference key="4">
    <citation type="journal article" date="2001" name="Proc. Natl. Acad. Sci. U.S.A.">
        <title>The Caenorhabditis elegans maternal-effect sterile proteins, MES-2, MES-3, and MES-6, are associated in a complex in embryos.</title>
        <authorList>
            <person name="Xu L."/>
            <person name="Fong Y."/>
            <person name="Strome S."/>
        </authorList>
    </citation>
    <scope>IDENTIFICATION IN A COMPLEX WITH MES-2 AND MES-6</scope>
</reference>
<reference key="5">
    <citation type="journal article" date="2002" name="Science">
        <title>Regulation of the different chromatin states of autosomes and X chromosomes in the germ line of C. elegans.</title>
        <authorList>
            <person name="Fong Y."/>
            <person name="Bender L."/>
            <person name="Wang W."/>
            <person name="Strome S."/>
        </authorList>
    </citation>
    <scope>FUNCTION</scope>
</reference>
<reference key="6">
    <citation type="journal article" date="2004" name="Curr. Biol.">
        <title>The MES-2/MES-3/MES-6 complex and regulation of histone H3 methylation in C. elegans.</title>
        <authorList>
            <person name="Bender L.B."/>
            <person name="Cao R."/>
            <person name="Zhang Y."/>
            <person name="Strome S."/>
        </authorList>
    </citation>
    <scope>FUNCTION</scope>
    <scope>IDENTIFICATION IN A COMPLEX WITH MES-2 AND MES-6</scope>
</reference>
<reference key="7">
    <citation type="journal article" date="2007" name="Dev. Biol.">
        <title>Transcription factor NFY globally represses the expression of the C. elegans Hox gene Abdominal-B homolog egl-5.</title>
        <authorList>
            <person name="Deng H."/>
            <person name="Sun Y."/>
            <person name="Zhang Y."/>
            <person name="Luo X."/>
            <person name="Hou W."/>
            <person name="Yan L."/>
            <person name="Chen Y."/>
            <person name="Tian E."/>
            <person name="Han J."/>
            <person name="Zhang H."/>
        </authorList>
    </citation>
    <scope>FUNCTION</scope>
    <scope>INTERACTION WITH NFYA-1</scope>
    <scope>DISRUPTION PHENOTYPE</scope>
</reference>
<feature type="chain" id="PRO_0000096439" description="Polycomb protein mes-3">
    <location>
        <begin position="1"/>
        <end position="754"/>
    </location>
</feature>
<feature type="region of interest" description="Disordered" evidence="1">
    <location>
        <begin position="1"/>
        <end position="83"/>
    </location>
</feature>
<feature type="compositionally biased region" description="Basic and acidic residues" evidence="1">
    <location>
        <begin position="31"/>
        <end position="40"/>
    </location>
</feature>
<feature type="compositionally biased region" description="Low complexity" evidence="1">
    <location>
        <begin position="51"/>
        <end position="61"/>
    </location>
</feature>
<feature type="mutagenesis site" description="In BN21; temperature-sensitive allele, which produces fertile progeny at permissive temperature (16 degrees Celsius) and sterile progeny at restrictive temperature (25 degrees Celsius), probably due to a mislocation into the cytoplasm." evidence="3">
    <original>C</original>
    <variation>Y</variation>
    <location>
        <position position="283"/>
    </location>
</feature>
<feature type="sequence conflict" description="In Ref. 1; AAB01719." evidence="7" ref="1">
    <original>A</original>
    <variation>V</variation>
    <location>
        <position position="264"/>
    </location>
</feature>
<accession>Q10665</accession>
<accession>P91324</accession>
<protein>
    <recommendedName>
        <fullName>Polycomb protein mes-3</fullName>
    </recommendedName>
    <alternativeName>
        <fullName>Maternal-effect sterile protein 3</fullName>
    </alternativeName>
</protein>
<gene>
    <name evidence="8" type="primary">mes-3</name>
    <name evidence="8" type="ORF">F54C1.3</name>
</gene>
<organism>
    <name type="scientific">Caenorhabditis elegans</name>
    <dbReference type="NCBI Taxonomy" id="6239"/>
    <lineage>
        <taxon>Eukaryota</taxon>
        <taxon>Metazoa</taxon>
        <taxon>Ecdysozoa</taxon>
        <taxon>Nematoda</taxon>
        <taxon>Chromadorea</taxon>
        <taxon>Rhabditida</taxon>
        <taxon>Rhabditina</taxon>
        <taxon>Rhabditomorpha</taxon>
        <taxon>Rhabditoidea</taxon>
        <taxon>Rhabditidae</taxon>
        <taxon>Peloderinae</taxon>
        <taxon>Caenorhabditis</taxon>
    </lineage>
</organism>
<dbReference type="EMBL" id="U34812">
    <property type="protein sequence ID" value="AAB01719.1"/>
    <property type="molecule type" value="mRNA"/>
</dbReference>
<dbReference type="EMBL" id="BX284601">
    <property type="protein sequence ID" value="CCD67544.1"/>
    <property type="molecule type" value="Genomic_DNA"/>
</dbReference>
<dbReference type="PIR" id="G87767">
    <property type="entry name" value="G87767"/>
</dbReference>
<dbReference type="PIR" id="S60464">
    <property type="entry name" value="S60464"/>
</dbReference>
<dbReference type="RefSeq" id="NP_001021492.1">
    <property type="nucleotide sequence ID" value="NM_001026321.4"/>
</dbReference>
<dbReference type="BioGRID" id="37584">
    <property type="interactions" value="8"/>
</dbReference>
<dbReference type="ComplexPortal" id="CPX-368">
    <property type="entry name" value="Polycomb Repressive Complex 2"/>
</dbReference>
<dbReference type="FunCoup" id="Q10665">
    <property type="interactions" value="1572"/>
</dbReference>
<dbReference type="IntAct" id="Q10665">
    <property type="interactions" value="2"/>
</dbReference>
<dbReference type="STRING" id="6239.F54C1.3a.1"/>
<dbReference type="iPTMnet" id="Q10665"/>
<dbReference type="PaxDb" id="6239-F54C1.3a"/>
<dbReference type="EnsemblMetazoa" id="F54C1.3a.1">
    <property type="protein sequence ID" value="F54C1.3a.1"/>
    <property type="gene ID" value="WBGene00003221"/>
</dbReference>
<dbReference type="EnsemblMetazoa" id="F54C1.3a.2">
    <property type="protein sequence ID" value="F54C1.3a.2"/>
    <property type="gene ID" value="WBGene00003221"/>
</dbReference>
<dbReference type="GeneID" id="172123"/>
<dbReference type="KEGG" id="cel:CELE_F54C1.3"/>
<dbReference type="UCSC" id="F54C1.3a">
    <property type="organism name" value="c. elegans"/>
</dbReference>
<dbReference type="AGR" id="WB:WBGene00003221"/>
<dbReference type="CTD" id="172123"/>
<dbReference type="WormBase" id="F54C1.3a">
    <property type="protein sequence ID" value="CE11046"/>
    <property type="gene ID" value="WBGene00003221"/>
    <property type="gene designation" value="mes-3"/>
</dbReference>
<dbReference type="eggNOG" id="ENOG502R29G">
    <property type="taxonomic scope" value="Eukaryota"/>
</dbReference>
<dbReference type="HOGENOM" id="CLU_393916_0_0_1"/>
<dbReference type="InParanoid" id="Q10665"/>
<dbReference type="OMA" id="CCININQ"/>
<dbReference type="OrthoDB" id="5877057at2759"/>
<dbReference type="PRO" id="PR:Q10665"/>
<dbReference type="Proteomes" id="UP000001940">
    <property type="component" value="Chromosome I"/>
</dbReference>
<dbReference type="Bgee" id="WBGene00003221">
    <property type="expression patterns" value="Expressed in pharyngeal muscle cell (C elegans) and 4 other cell types or tissues"/>
</dbReference>
<dbReference type="ExpressionAtlas" id="Q10665">
    <property type="expression patterns" value="baseline and differential"/>
</dbReference>
<dbReference type="GO" id="GO:0000786">
    <property type="term" value="C:nucleosome"/>
    <property type="evidence" value="ECO:0000314"/>
    <property type="project" value="WormBase"/>
</dbReference>
<dbReference type="GO" id="GO:0005634">
    <property type="term" value="C:nucleus"/>
    <property type="evidence" value="ECO:0000314"/>
    <property type="project" value="WormBase"/>
</dbReference>
<dbReference type="GO" id="GO:0031519">
    <property type="term" value="C:PcG protein complex"/>
    <property type="evidence" value="ECO:0000353"/>
    <property type="project" value="WormBase"/>
</dbReference>
<dbReference type="GO" id="GO:0010629">
    <property type="term" value="P:negative regulation of gene expression"/>
    <property type="evidence" value="ECO:0000314"/>
    <property type="project" value="ComplexPortal"/>
</dbReference>
<dbReference type="GO" id="GO:0010468">
    <property type="term" value="P:regulation of gene expression"/>
    <property type="evidence" value="ECO:0000315"/>
    <property type="project" value="UniProtKB"/>
</dbReference>
<evidence type="ECO:0000256" key="1">
    <source>
        <dbReference type="SAM" id="MobiDB-lite"/>
    </source>
</evidence>
<evidence type="ECO:0000269" key="2">
    <source>
    </source>
</evidence>
<evidence type="ECO:0000269" key="3">
    <source>
    </source>
</evidence>
<evidence type="ECO:0000269" key="4">
    <source>
    </source>
</evidence>
<evidence type="ECO:0000269" key="5">
    <source>
    </source>
</evidence>
<evidence type="ECO:0000269" key="6">
    <source>
    </source>
</evidence>
<evidence type="ECO:0000305" key="7"/>
<evidence type="ECO:0000312" key="8">
    <source>
        <dbReference type="WormBase" id="F54C1.3a"/>
    </source>
</evidence>
<proteinExistence type="evidence at protein level"/>
<keyword id="KW-0217">Developmental protein</keyword>
<keyword id="KW-0539">Nucleus</keyword>
<keyword id="KW-1185">Reference proteome</keyword>
<keyword id="KW-0678">Repressor</keyword>
<keyword id="KW-0804">Transcription</keyword>
<keyword id="KW-0805">Transcription regulation</keyword>
<name>MES3_CAEEL</name>